<keyword id="KW-0408">Iron</keyword>
<keyword id="KW-0411">Iron-sulfur</keyword>
<keyword id="KW-0479">Metal-binding</keyword>
<keyword id="KW-1185">Reference proteome</keyword>
<name>ERPA_ERWT9</name>
<comment type="function">
    <text evidence="1">Required for insertion of 4Fe-4S clusters for at least IspG.</text>
</comment>
<comment type="cofactor">
    <cofactor evidence="1">
        <name>iron-sulfur cluster</name>
        <dbReference type="ChEBI" id="CHEBI:30408"/>
    </cofactor>
    <text evidence="1">Binds 1 iron-sulfur cluster per subunit.</text>
</comment>
<comment type="subunit">
    <text evidence="1">Homodimer.</text>
</comment>
<comment type="similarity">
    <text evidence="1">Belongs to the HesB/IscA family.</text>
</comment>
<organism>
    <name type="scientific">Erwinia tasmaniensis (strain DSM 17950 / CFBP 7177 / CIP 109463 / NCPPB 4357 / Et1/99)</name>
    <dbReference type="NCBI Taxonomy" id="465817"/>
    <lineage>
        <taxon>Bacteria</taxon>
        <taxon>Pseudomonadati</taxon>
        <taxon>Pseudomonadota</taxon>
        <taxon>Gammaproteobacteria</taxon>
        <taxon>Enterobacterales</taxon>
        <taxon>Erwiniaceae</taxon>
        <taxon>Erwinia</taxon>
    </lineage>
</organism>
<sequence>MTDDVALPLQFTDAAASKVKNLISDENNPDLKLRVYITGGGCSGFQYGFTFDDKVNEGDMTIEKSGVALVVDPMSLQYLVGGSVDYTEGLEGSRFIVTNPNAKTTCGCGSSFSI</sequence>
<reference key="1">
    <citation type="journal article" date="2008" name="Environ. Microbiol.">
        <title>The genome of Erwinia tasmaniensis strain Et1/99, a non-pathogenic bacterium in the genus Erwinia.</title>
        <authorList>
            <person name="Kube M."/>
            <person name="Migdoll A.M."/>
            <person name="Mueller I."/>
            <person name="Kuhl H."/>
            <person name="Beck A."/>
            <person name="Reinhardt R."/>
            <person name="Geider K."/>
        </authorList>
    </citation>
    <scope>NUCLEOTIDE SEQUENCE [LARGE SCALE GENOMIC DNA]</scope>
    <source>
        <strain>DSM 17950 / CFBP 7177 / CIP 109463 / NCPPB 4357 / Et1/99</strain>
    </source>
</reference>
<proteinExistence type="inferred from homology"/>
<dbReference type="EMBL" id="CU468135">
    <property type="protein sequence ID" value="CAO95926.1"/>
    <property type="molecule type" value="Genomic_DNA"/>
</dbReference>
<dbReference type="RefSeq" id="WP_012440628.1">
    <property type="nucleotide sequence ID" value="NC_010694.1"/>
</dbReference>
<dbReference type="SMR" id="B2VE26"/>
<dbReference type="STRING" id="465817.ETA_08800"/>
<dbReference type="KEGG" id="eta:ETA_08800"/>
<dbReference type="eggNOG" id="COG0316">
    <property type="taxonomic scope" value="Bacteria"/>
</dbReference>
<dbReference type="HOGENOM" id="CLU_069054_5_3_6"/>
<dbReference type="OrthoDB" id="9801228at2"/>
<dbReference type="Proteomes" id="UP000001726">
    <property type="component" value="Chromosome"/>
</dbReference>
<dbReference type="GO" id="GO:0005829">
    <property type="term" value="C:cytosol"/>
    <property type="evidence" value="ECO:0007669"/>
    <property type="project" value="TreeGrafter"/>
</dbReference>
<dbReference type="GO" id="GO:0051537">
    <property type="term" value="F:2 iron, 2 sulfur cluster binding"/>
    <property type="evidence" value="ECO:0007669"/>
    <property type="project" value="TreeGrafter"/>
</dbReference>
<dbReference type="GO" id="GO:0051539">
    <property type="term" value="F:4 iron, 4 sulfur cluster binding"/>
    <property type="evidence" value="ECO:0007669"/>
    <property type="project" value="TreeGrafter"/>
</dbReference>
<dbReference type="GO" id="GO:0005506">
    <property type="term" value="F:iron ion binding"/>
    <property type="evidence" value="ECO:0007669"/>
    <property type="project" value="UniProtKB-UniRule"/>
</dbReference>
<dbReference type="GO" id="GO:0016226">
    <property type="term" value="P:iron-sulfur cluster assembly"/>
    <property type="evidence" value="ECO:0007669"/>
    <property type="project" value="UniProtKB-UniRule"/>
</dbReference>
<dbReference type="FunFam" id="2.60.300.12:FF:000002">
    <property type="entry name" value="Iron-sulfur cluster insertion protein ErpA"/>
    <property type="match status" value="1"/>
</dbReference>
<dbReference type="Gene3D" id="2.60.300.12">
    <property type="entry name" value="HesB-like domain"/>
    <property type="match status" value="1"/>
</dbReference>
<dbReference type="HAMAP" id="MF_01380">
    <property type="entry name" value="Fe_S_insert_ErpA"/>
    <property type="match status" value="1"/>
</dbReference>
<dbReference type="InterPro" id="IPR000361">
    <property type="entry name" value="FeS_biogenesis"/>
</dbReference>
<dbReference type="InterPro" id="IPR016092">
    <property type="entry name" value="FeS_cluster_insertion"/>
</dbReference>
<dbReference type="InterPro" id="IPR017870">
    <property type="entry name" value="FeS_cluster_insertion_CS"/>
</dbReference>
<dbReference type="InterPro" id="IPR023063">
    <property type="entry name" value="FeS_cluster_insertion_RrpA"/>
</dbReference>
<dbReference type="InterPro" id="IPR035903">
    <property type="entry name" value="HesB-like_dom_sf"/>
</dbReference>
<dbReference type="NCBIfam" id="TIGR00049">
    <property type="entry name" value="iron-sulfur cluster assembly accessory protein"/>
    <property type="match status" value="1"/>
</dbReference>
<dbReference type="NCBIfam" id="NF010147">
    <property type="entry name" value="PRK13623.1"/>
    <property type="match status" value="1"/>
</dbReference>
<dbReference type="PANTHER" id="PTHR43011">
    <property type="entry name" value="IRON-SULFUR CLUSTER ASSEMBLY 2 HOMOLOG, MITOCHONDRIAL"/>
    <property type="match status" value="1"/>
</dbReference>
<dbReference type="PANTHER" id="PTHR43011:SF1">
    <property type="entry name" value="IRON-SULFUR CLUSTER ASSEMBLY 2 HOMOLOG, MITOCHONDRIAL"/>
    <property type="match status" value="1"/>
</dbReference>
<dbReference type="Pfam" id="PF01521">
    <property type="entry name" value="Fe-S_biosyn"/>
    <property type="match status" value="1"/>
</dbReference>
<dbReference type="SUPFAM" id="SSF89360">
    <property type="entry name" value="HesB-like domain"/>
    <property type="match status" value="1"/>
</dbReference>
<dbReference type="PROSITE" id="PS01152">
    <property type="entry name" value="HESB"/>
    <property type="match status" value="1"/>
</dbReference>
<evidence type="ECO:0000255" key="1">
    <source>
        <dbReference type="HAMAP-Rule" id="MF_01380"/>
    </source>
</evidence>
<protein>
    <recommendedName>
        <fullName evidence="1">Iron-sulfur cluster insertion protein ErpA</fullName>
    </recommendedName>
</protein>
<gene>
    <name evidence="1" type="primary">erpA</name>
    <name type="ordered locus">ETA_08800</name>
</gene>
<feature type="chain" id="PRO_1000144918" description="Iron-sulfur cluster insertion protein ErpA">
    <location>
        <begin position="1"/>
        <end position="114"/>
    </location>
</feature>
<feature type="binding site" evidence="1">
    <location>
        <position position="42"/>
    </location>
    <ligand>
        <name>iron-sulfur cluster</name>
        <dbReference type="ChEBI" id="CHEBI:30408"/>
    </ligand>
</feature>
<feature type="binding site" evidence="1">
    <location>
        <position position="106"/>
    </location>
    <ligand>
        <name>iron-sulfur cluster</name>
        <dbReference type="ChEBI" id="CHEBI:30408"/>
    </ligand>
</feature>
<feature type="binding site" evidence="1">
    <location>
        <position position="108"/>
    </location>
    <ligand>
        <name>iron-sulfur cluster</name>
        <dbReference type="ChEBI" id="CHEBI:30408"/>
    </ligand>
</feature>
<accession>B2VE26</accession>